<reference key="1">
    <citation type="journal article" date="2001" name="Proc. Natl. Acad. Sci. U.S.A.">
        <title>Complete genome sequence of Caulobacter crescentus.</title>
        <authorList>
            <person name="Nierman W.C."/>
            <person name="Feldblyum T.V."/>
            <person name="Laub M.T."/>
            <person name="Paulsen I.T."/>
            <person name="Nelson K.E."/>
            <person name="Eisen J.A."/>
            <person name="Heidelberg J.F."/>
            <person name="Alley M.R.K."/>
            <person name="Ohta N."/>
            <person name="Maddock J.R."/>
            <person name="Potocka I."/>
            <person name="Nelson W.C."/>
            <person name="Newton A."/>
            <person name="Stephens C."/>
            <person name="Phadke N.D."/>
            <person name="Ely B."/>
            <person name="DeBoy R.T."/>
            <person name="Dodson R.J."/>
            <person name="Durkin A.S."/>
            <person name="Gwinn M.L."/>
            <person name="Haft D.H."/>
            <person name="Kolonay J.F."/>
            <person name="Smit J."/>
            <person name="Craven M.B."/>
            <person name="Khouri H.M."/>
            <person name="Shetty J."/>
            <person name="Berry K.J."/>
            <person name="Utterback T.R."/>
            <person name="Tran K."/>
            <person name="Wolf A.M."/>
            <person name="Vamathevan J.J."/>
            <person name="Ermolaeva M.D."/>
            <person name="White O."/>
            <person name="Salzberg S.L."/>
            <person name="Venter J.C."/>
            <person name="Shapiro L."/>
            <person name="Fraser C.M."/>
        </authorList>
    </citation>
    <scope>NUCLEOTIDE SEQUENCE [LARGE SCALE GENOMIC DNA]</scope>
    <source>
        <strain>ATCC 19089 / CIP 103742 / CB 15</strain>
    </source>
</reference>
<name>PLSX_CAUVC</name>
<keyword id="KW-0963">Cytoplasm</keyword>
<keyword id="KW-0444">Lipid biosynthesis</keyword>
<keyword id="KW-0443">Lipid metabolism</keyword>
<keyword id="KW-0594">Phospholipid biosynthesis</keyword>
<keyword id="KW-1208">Phospholipid metabolism</keyword>
<keyword id="KW-1185">Reference proteome</keyword>
<keyword id="KW-0808">Transferase</keyword>
<comment type="function">
    <text evidence="1">Catalyzes the reversible formation of acyl-phosphate (acyl-PO(4)) from acyl-[acyl-carrier-protein] (acyl-ACP). This enzyme utilizes acyl-ACP as fatty acyl donor, but not acyl-CoA.</text>
</comment>
<comment type="catalytic activity">
    <reaction evidence="1">
        <text>a fatty acyl-[ACP] + phosphate = an acyl phosphate + holo-[ACP]</text>
        <dbReference type="Rhea" id="RHEA:42292"/>
        <dbReference type="Rhea" id="RHEA-COMP:9685"/>
        <dbReference type="Rhea" id="RHEA-COMP:14125"/>
        <dbReference type="ChEBI" id="CHEBI:43474"/>
        <dbReference type="ChEBI" id="CHEBI:59918"/>
        <dbReference type="ChEBI" id="CHEBI:64479"/>
        <dbReference type="ChEBI" id="CHEBI:138651"/>
        <dbReference type="EC" id="2.3.1.274"/>
    </reaction>
</comment>
<comment type="pathway">
    <text evidence="1">Lipid metabolism; phospholipid metabolism.</text>
</comment>
<comment type="subunit">
    <text evidence="1">Homodimer. Probably interacts with PlsY.</text>
</comment>
<comment type="subcellular location">
    <subcellularLocation>
        <location evidence="1">Cytoplasm</location>
    </subcellularLocation>
    <text evidence="1">Associated with the membrane possibly through PlsY.</text>
</comment>
<comment type="similarity">
    <text evidence="1">Belongs to the PlsX family.</text>
</comment>
<protein>
    <recommendedName>
        <fullName evidence="1">Phosphate acyltransferase</fullName>
        <ecNumber evidence="1">2.3.1.274</ecNumber>
    </recommendedName>
    <alternativeName>
        <fullName evidence="1">Acyl-ACP phosphotransacylase</fullName>
    </alternativeName>
    <alternativeName>
        <fullName evidence="1">Acyl-[acyl-carrier-protein]--phosphate acyltransferase</fullName>
    </alternativeName>
    <alternativeName>
        <fullName evidence="1">Phosphate-acyl-ACP acyltransferase</fullName>
    </alternativeName>
</protein>
<evidence type="ECO:0000255" key="1">
    <source>
        <dbReference type="HAMAP-Rule" id="MF_00019"/>
    </source>
</evidence>
<accession>Q9A8I5</accession>
<sequence>MSQSLVISVDAMGGDHGPSIVVPGIAQALQALPGVRFLLHGDGAAIEAELAKHPGAKAVSEVRHCDKAIGMDEKPAQAMRRGKGSSMWNAVEAVRENEAQACVSAGNTGALMAISKLILRMGAELERPAIVANWPTMKGVTTVLDVGANVESDASQLVEFAIMGAAFHHAVHGSKRPTVGLLNVGSEDQKGHEEVREAHAILRETTLDFDYHGFVEGNDIAYGTVDVVVTDGFTGNVALKTAEGLARFFSNEIKSTLTSGPLAMLGALIASGALKKMRHRLDPSRVNGAPLLGLNGIVVKSHGGADANGFASAIRVATNLARSDFRAEIDRNLKRLTATAAAIKSGDGQGPGEDAQGVAE</sequence>
<organism>
    <name type="scientific">Caulobacter vibrioides (strain ATCC 19089 / CIP 103742 / CB 15)</name>
    <name type="common">Caulobacter crescentus</name>
    <dbReference type="NCBI Taxonomy" id="190650"/>
    <lineage>
        <taxon>Bacteria</taxon>
        <taxon>Pseudomonadati</taxon>
        <taxon>Pseudomonadota</taxon>
        <taxon>Alphaproteobacteria</taxon>
        <taxon>Caulobacterales</taxon>
        <taxon>Caulobacteraceae</taxon>
        <taxon>Caulobacter</taxon>
    </lineage>
</organism>
<dbReference type="EC" id="2.3.1.274" evidence="1"/>
<dbReference type="EMBL" id="AE005673">
    <property type="protein sequence ID" value="AAK23349.1"/>
    <property type="molecule type" value="Genomic_DNA"/>
</dbReference>
<dbReference type="PIR" id="A87419">
    <property type="entry name" value="A87419"/>
</dbReference>
<dbReference type="RefSeq" id="NP_420181.1">
    <property type="nucleotide sequence ID" value="NC_002696.2"/>
</dbReference>
<dbReference type="RefSeq" id="WP_010919245.1">
    <property type="nucleotide sequence ID" value="NC_002696.2"/>
</dbReference>
<dbReference type="SMR" id="Q9A8I5"/>
<dbReference type="STRING" id="190650.CC_1368"/>
<dbReference type="EnsemblBacteria" id="AAK23349">
    <property type="protein sequence ID" value="AAK23349"/>
    <property type="gene ID" value="CC_1368"/>
</dbReference>
<dbReference type="KEGG" id="ccr:CC_1368"/>
<dbReference type="PATRIC" id="fig|190650.5.peg.1398"/>
<dbReference type="eggNOG" id="COG0416">
    <property type="taxonomic scope" value="Bacteria"/>
</dbReference>
<dbReference type="HOGENOM" id="CLU_039379_1_0_5"/>
<dbReference type="BioCyc" id="CAULO:CC1368-MONOMER"/>
<dbReference type="UniPathway" id="UPA00085"/>
<dbReference type="Proteomes" id="UP000001816">
    <property type="component" value="Chromosome"/>
</dbReference>
<dbReference type="GO" id="GO:0005737">
    <property type="term" value="C:cytoplasm"/>
    <property type="evidence" value="ECO:0007669"/>
    <property type="project" value="UniProtKB-SubCell"/>
</dbReference>
<dbReference type="GO" id="GO:0043811">
    <property type="term" value="F:phosphate:acyl-[acyl carrier protein] acyltransferase activity"/>
    <property type="evidence" value="ECO:0007669"/>
    <property type="project" value="UniProtKB-UniRule"/>
</dbReference>
<dbReference type="GO" id="GO:0006633">
    <property type="term" value="P:fatty acid biosynthetic process"/>
    <property type="evidence" value="ECO:0007669"/>
    <property type="project" value="UniProtKB-UniRule"/>
</dbReference>
<dbReference type="GO" id="GO:0008654">
    <property type="term" value="P:phospholipid biosynthetic process"/>
    <property type="evidence" value="ECO:0007669"/>
    <property type="project" value="UniProtKB-KW"/>
</dbReference>
<dbReference type="Gene3D" id="3.40.718.10">
    <property type="entry name" value="Isopropylmalate Dehydrogenase"/>
    <property type="match status" value="1"/>
</dbReference>
<dbReference type="HAMAP" id="MF_00019">
    <property type="entry name" value="PlsX"/>
    <property type="match status" value="1"/>
</dbReference>
<dbReference type="InterPro" id="IPR003664">
    <property type="entry name" value="FA_synthesis"/>
</dbReference>
<dbReference type="InterPro" id="IPR012281">
    <property type="entry name" value="Phospholipid_synth_PlsX-like"/>
</dbReference>
<dbReference type="NCBIfam" id="TIGR00182">
    <property type="entry name" value="plsX"/>
    <property type="match status" value="1"/>
</dbReference>
<dbReference type="PANTHER" id="PTHR30100">
    <property type="entry name" value="FATTY ACID/PHOSPHOLIPID SYNTHESIS PROTEIN PLSX"/>
    <property type="match status" value="1"/>
</dbReference>
<dbReference type="PANTHER" id="PTHR30100:SF1">
    <property type="entry name" value="PHOSPHATE ACYLTRANSFERASE"/>
    <property type="match status" value="1"/>
</dbReference>
<dbReference type="Pfam" id="PF02504">
    <property type="entry name" value="FA_synthesis"/>
    <property type="match status" value="1"/>
</dbReference>
<dbReference type="PIRSF" id="PIRSF002465">
    <property type="entry name" value="Phsphlp_syn_PlsX"/>
    <property type="match status" value="1"/>
</dbReference>
<dbReference type="SUPFAM" id="SSF53659">
    <property type="entry name" value="Isocitrate/Isopropylmalate dehydrogenase-like"/>
    <property type="match status" value="1"/>
</dbReference>
<proteinExistence type="inferred from homology"/>
<feature type="chain" id="PRO_0000189861" description="Phosphate acyltransferase">
    <location>
        <begin position="1"/>
        <end position="360"/>
    </location>
</feature>
<gene>
    <name evidence="1" type="primary">plsX</name>
    <name type="ordered locus">CC_1368</name>
</gene>